<sequence>MLKYDVIVIGGGHAGVEAAAASARLGVPTLLITLKPGNLGEMSCNPAIGGIAKGILVKEIDALDGLMGYVIDQAGIHYKMLNETRGPAVWGPRAQADRKLYKKAMYQILTNYPNLNILYGKVEDIEIKSSKVKAVVLNDGSKIPCQKIILTTGSFLSGLIHIGSTKIPAGRVDEEASYGLSNTLKRVGFKIARLKTGTPPRIDGLTIDYSKTVLQPGDKTPRPFSALTNIVDVPQINCFITKTTSETHDIIRENLDKSAMYSGQIEAIGPRYCPSIEDKIVRFSTKSEHRIFLEPEGLDDYTIYPNGISTSLPEEVQCKLIKTIPGLEKATILRPGYAIEYDYVDPREISITLETKKIMGLYFAGQINGTTGYEEAAGQGIVAGINAALAVKNQPPFILTRANSYIGVMIDDLTIFGTKEPYRMFTSRAEYRLSLRADNADLRLTELGINIGVVSKKRKEIFKKKCYNIEKTRNLLKTLSFTTSKLVKIGVQVAQDGTYKTVLDLFKIPNFTIEQAIKIFPKLQEINSNILQLLYIEAKYASYLAKQQADINLFQNEEIQLIPKNIDYFKIPSISLEIREKLSYYKPTTIGIARRIPGITPAAITAIIIYLKTKYNDGSFISNN</sequence>
<feature type="chain" id="PRO_1000016665" description="tRNA uridine 5-carboxymethylaminomethyl modification enzyme MnmG">
    <location>
        <begin position="1"/>
        <end position="624"/>
    </location>
</feature>
<feature type="binding site" evidence="1">
    <location>
        <begin position="10"/>
        <end position="15"/>
    </location>
    <ligand>
        <name>FAD</name>
        <dbReference type="ChEBI" id="CHEBI:57692"/>
    </ligand>
</feature>
<feature type="binding site" evidence="1">
    <location>
        <position position="122"/>
    </location>
    <ligand>
        <name>FAD</name>
        <dbReference type="ChEBI" id="CHEBI:57692"/>
    </ligand>
</feature>
<feature type="binding site" evidence="1">
    <location>
        <position position="177"/>
    </location>
    <ligand>
        <name>FAD</name>
        <dbReference type="ChEBI" id="CHEBI:57692"/>
    </ligand>
</feature>
<feature type="binding site" evidence="1">
    <location>
        <begin position="269"/>
        <end position="283"/>
    </location>
    <ligand>
        <name>NAD(+)</name>
        <dbReference type="ChEBI" id="CHEBI:57540"/>
    </ligand>
</feature>
<feature type="binding site" evidence="1">
    <location>
        <position position="366"/>
    </location>
    <ligand>
        <name>FAD</name>
        <dbReference type="ChEBI" id="CHEBI:57692"/>
    </ligand>
</feature>
<dbReference type="EMBL" id="CP000409">
    <property type="protein sequence ID" value="ABV73006.1"/>
    <property type="molecule type" value="Genomic_DNA"/>
</dbReference>
<dbReference type="RefSeq" id="WP_012148207.1">
    <property type="nucleotide sequence ID" value="NC_009879.1"/>
</dbReference>
<dbReference type="SMR" id="A8EXC3"/>
<dbReference type="STRING" id="293613.A1E_00265"/>
<dbReference type="KEGG" id="rcm:A1E_00265"/>
<dbReference type="eggNOG" id="COG0445">
    <property type="taxonomic scope" value="Bacteria"/>
</dbReference>
<dbReference type="HOGENOM" id="CLU_007831_2_2_5"/>
<dbReference type="Proteomes" id="UP000007056">
    <property type="component" value="Chromosome"/>
</dbReference>
<dbReference type="GO" id="GO:0005829">
    <property type="term" value="C:cytosol"/>
    <property type="evidence" value="ECO:0007669"/>
    <property type="project" value="TreeGrafter"/>
</dbReference>
<dbReference type="GO" id="GO:0050660">
    <property type="term" value="F:flavin adenine dinucleotide binding"/>
    <property type="evidence" value="ECO:0007669"/>
    <property type="project" value="UniProtKB-UniRule"/>
</dbReference>
<dbReference type="GO" id="GO:0030488">
    <property type="term" value="P:tRNA methylation"/>
    <property type="evidence" value="ECO:0007669"/>
    <property type="project" value="TreeGrafter"/>
</dbReference>
<dbReference type="GO" id="GO:0002098">
    <property type="term" value="P:tRNA wobble uridine modification"/>
    <property type="evidence" value="ECO:0007669"/>
    <property type="project" value="InterPro"/>
</dbReference>
<dbReference type="FunFam" id="1.10.150.570:FF:000001">
    <property type="entry name" value="tRNA uridine 5-carboxymethylaminomethyl modification enzyme MnmG"/>
    <property type="match status" value="1"/>
</dbReference>
<dbReference type="FunFam" id="3.50.50.60:FF:000002">
    <property type="entry name" value="tRNA uridine 5-carboxymethylaminomethyl modification enzyme MnmG"/>
    <property type="match status" value="1"/>
</dbReference>
<dbReference type="Gene3D" id="3.50.50.60">
    <property type="entry name" value="FAD/NAD(P)-binding domain"/>
    <property type="match status" value="2"/>
</dbReference>
<dbReference type="Gene3D" id="1.10.150.570">
    <property type="entry name" value="GidA associated domain, C-terminal subdomain"/>
    <property type="match status" value="1"/>
</dbReference>
<dbReference type="Gene3D" id="1.10.10.1800">
    <property type="entry name" value="tRNA uridine 5-carboxymethylaminomethyl modification enzyme MnmG/GidA"/>
    <property type="match status" value="1"/>
</dbReference>
<dbReference type="HAMAP" id="MF_00129">
    <property type="entry name" value="MnmG_GidA"/>
    <property type="match status" value="1"/>
</dbReference>
<dbReference type="InterPro" id="IPR036188">
    <property type="entry name" value="FAD/NAD-bd_sf"/>
</dbReference>
<dbReference type="InterPro" id="IPR049312">
    <property type="entry name" value="GIDA_C_N"/>
</dbReference>
<dbReference type="InterPro" id="IPR004416">
    <property type="entry name" value="MnmG"/>
</dbReference>
<dbReference type="InterPro" id="IPR002218">
    <property type="entry name" value="MnmG-rel"/>
</dbReference>
<dbReference type="InterPro" id="IPR020595">
    <property type="entry name" value="MnmG-rel_CS"/>
</dbReference>
<dbReference type="InterPro" id="IPR026904">
    <property type="entry name" value="MnmG_C"/>
</dbReference>
<dbReference type="InterPro" id="IPR047001">
    <property type="entry name" value="MnmG_C_subdom"/>
</dbReference>
<dbReference type="InterPro" id="IPR044920">
    <property type="entry name" value="MnmG_C_subdom_sf"/>
</dbReference>
<dbReference type="InterPro" id="IPR040131">
    <property type="entry name" value="MnmG_N"/>
</dbReference>
<dbReference type="NCBIfam" id="TIGR00136">
    <property type="entry name" value="mnmG_gidA"/>
    <property type="match status" value="1"/>
</dbReference>
<dbReference type="PANTHER" id="PTHR11806">
    <property type="entry name" value="GLUCOSE INHIBITED DIVISION PROTEIN A"/>
    <property type="match status" value="1"/>
</dbReference>
<dbReference type="PANTHER" id="PTHR11806:SF0">
    <property type="entry name" value="PROTEIN MTO1 HOMOLOG, MITOCHONDRIAL"/>
    <property type="match status" value="1"/>
</dbReference>
<dbReference type="Pfam" id="PF01134">
    <property type="entry name" value="GIDA"/>
    <property type="match status" value="1"/>
</dbReference>
<dbReference type="Pfam" id="PF21680">
    <property type="entry name" value="GIDA_C_1st"/>
    <property type="match status" value="1"/>
</dbReference>
<dbReference type="Pfam" id="PF13932">
    <property type="entry name" value="SAM_GIDA_C"/>
    <property type="match status" value="1"/>
</dbReference>
<dbReference type="PRINTS" id="PR00411">
    <property type="entry name" value="PNDRDTASEI"/>
</dbReference>
<dbReference type="SMART" id="SM01228">
    <property type="entry name" value="GIDA_assoc_3"/>
    <property type="match status" value="1"/>
</dbReference>
<dbReference type="SUPFAM" id="SSF51905">
    <property type="entry name" value="FAD/NAD(P)-binding domain"/>
    <property type="match status" value="1"/>
</dbReference>
<dbReference type="PROSITE" id="PS01280">
    <property type="entry name" value="GIDA_1"/>
    <property type="match status" value="1"/>
</dbReference>
<dbReference type="PROSITE" id="PS01281">
    <property type="entry name" value="GIDA_2"/>
    <property type="match status" value="1"/>
</dbReference>
<gene>
    <name evidence="1" type="primary">mnmG</name>
    <name evidence="1" type="synonym">gidA</name>
    <name type="ordered locus">A1E_00265</name>
</gene>
<proteinExistence type="inferred from homology"/>
<protein>
    <recommendedName>
        <fullName evidence="1">tRNA uridine 5-carboxymethylaminomethyl modification enzyme MnmG</fullName>
    </recommendedName>
    <alternativeName>
        <fullName evidence="1">Glucose-inhibited division protein A</fullName>
    </alternativeName>
</protein>
<evidence type="ECO:0000255" key="1">
    <source>
        <dbReference type="HAMAP-Rule" id="MF_00129"/>
    </source>
</evidence>
<name>MNMG_RICCK</name>
<comment type="function">
    <text evidence="1">NAD-binding protein involved in the addition of a carboxymethylaminomethyl (cmnm) group at the wobble position (U34) of certain tRNAs, forming tRNA-cmnm(5)s(2)U34.</text>
</comment>
<comment type="cofactor">
    <cofactor evidence="1">
        <name>FAD</name>
        <dbReference type="ChEBI" id="CHEBI:57692"/>
    </cofactor>
</comment>
<comment type="subunit">
    <text evidence="1">Homodimer. Heterotetramer of two MnmE and two MnmG subunits.</text>
</comment>
<comment type="subcellular location">
    <subcellularLocation>
        <location evidence="1">Cytoplasm</location>
    </subcellularLocation>
</comment>
<comment type="similarity">
    <text evidence="1">Belongs to the MnmG family.</text>
</comment>
<reference key="1">
    <citation type="submission" date="2007-09" db="EMBL/GenBank/DDBJ databases">
        <title>Complete genome sequence of Rickettsia canadensis.</title>
        <authorList>
            <person name="Madan A."/>
            <person name="Fahey J."/>
            <person name="Helton E."/>
            <person name="Ketteman M."/>
            <person name="Madan A."/>
            <person name="Rodrigues S."/>
            <person name="Sanchez A."/>
            <person name="Whiting M."/>
            <person name="Dasch G."/>
            <person name="Eremeeva M."/>
        </authorList>
    </citation>
    <scope>NUCLEOTIDE SEQUENCE [LARGE SCALE GENOMIC DNA]</scope>
    <source>
        <strain>McKiel</strain>
    </source>
</reference>
<keyword id="KW-0963">Cytoplasm</keyword>
<keyword id="KW-0274">FAD</keyword>
<keyword id="KW-0285">Flavoprotein</keyword>
<keyword id="KW-0520">NAD</keyword>
<keyword id="KW-0819">tRNA processing</keyword>
<organism>
    <name type="scientific">Rickettsia canadensis (strain McKiel)</name>
    <dbReference type="NCBI Taxonomy" id="293613"/>
    <lineage>
        <taxon>Bacteria</taxon>
        <taxon>Pseudomonadati</taxon>
        <taxon>Pseudomonadota</taxon>
        <taxon>Alphaproteobacteria</taxon>
        <taxon>Rickettsiales</taxon>
        <taxon>Rickettsiaceae</taxon>
        <taxon>Rickettsieae</taxon>
        <taxon>Rickettsia</taxon>
        <taxon>belli group</taxon>
    </lineage>
</organism>
<accession>A8EXC3</accession>